<feature type="signal peptide" evidence="2">
    <location>
        <begin position="1"/>
        <end position="21"/>
    </location>
</feature>
<feature type="chain" id="PRO_0000287604" description="Inactive serine protease PAMR1">
    <location>
        <begin position="22"/>
        <end position="720"/>
    </location>
</feature>
<feature type="domain" description="CUB" evidence="3">
    <location>
        <begin position="128"/>
        <end position="236"/>
    </location>
</feature>
<feature type="domain" description="EGF-like" evidence="4">
    <location>
        <begin position="235"/>
        <end position="272"/>
    </location>
</feature>
<feature type="domain" description="Sushi 1" evidence="6">
    <location>
        <begin position="278"/>
        <end position="344"/>
    </location>
</feature>
<feature type="domain" description="Sushi 2" evidence="6">
    <location>
        <begin position="387"/>
        <end position="444"/>
    </location>
</feature>
<feature type="domain" description="Peptidase S1" evidence="5">
    <location>
        <begin position="445"/>
        <end position="720"/>
    </location>
</feature>
<feature type="glycosylation site" description="N-linked (GlcNAc...) asparagine" evidence="2">
    <location>
        <position position="451"/>
    </location>
</feature>
<feature type="glycosylation site" description="N-linked (GlcNAc...) asparagine" evidence="2">
    <location>
        <position position="614"/>
    </location>
</feature>
<feature type="disulfide bond" evidence="1">
    <location>
        <begin position="128"/>
        <end position="150"/>
    </location>
</feature>
<feature type="disulfide bond" evidence="1">
    <location>
        <begin position="177"/>
        <end position="199"/>
    </location>
</feature>
<feature type="disulfide bond" evidence="1">
    <location>
        <begin position="239"/>
        <end position="250"/>
    </location>
</feature>
<feature type="disulfide bond" evidence="1">
    <location>
        <begin position="244"/>
        <end position="260"/>
    </location>
</feature>
<feature type="disulfide bond" evidence="1">
    <location>
        <begin position="262"/>
        <end position="271"/>
    </location>
</feature>
<feature type="disulfide bond" evidence="1">
    <location>
        <begin position="280"/>
        <end position="329"/>
    </location>
</feature>
<feature type="disulfide bond" evidence="1">
    <location>
        <begin position="315"/>
        <end position="342"/>
    </location>
</feature>
<feature type="disulfide bond" evidence="1">
    <location>
        <begin position="414"/>
        <end position="442"/>
    </location>
</feature>
<feature type="disulfide bond" evidence="1">
    <location>
        <begin position="489"/>
        <end position="505"/>
    </location>
</feature>
<feature type="disulfide bond" evidence="1">
    <location>
        <begin position="630"/>
        <end position="649"/>
    </location>
</feature>
<feature type="disulfide bond" evidence="1">
    <location>
        <begin position="661"/>
        <end position="697"/>
    </location>
</feature>
<sequence>MELGCWTQLGLTFLQLLLISSLPREYTVINEACPGAEWNIMCRECCEYDQIECVCPGKKEVVGYTIPCCRNEENECDSCLIHPGCTIFENCKSCRNGSWGGTLDDFYVKGFYCAECRAGWYGGDCMRCGQVLRAPKGQILLESYPLNAHCEWTIHAKPGFVIQLRFVMLSLEFDYMCQYDYVEVRDGDNRDGQIIKRVCGNERPAPIQSTGSSLHVLFHSDGSKNFDGFHAIFEEITACSSSPCFHDGTCVLDKAGSYKCACLAGYTGQRCENLLEERNCSDPGGPVNGYQKITGGPGLINGRHAKIGTVVSFFCNNSYVLSGNEKRTCQQNGEWSGKQPICIKACREPKISDLVRRRVLPIQVQSRETPLHQLYSAAFSKQKLQSAPTKKPALPFGDLPMGYQHLHTQLQYECISPFYRRLGSSRRTCLRTGKWSGQAPSCIPICGKIENVTAPKTQGLRWPWQAAIYRRTSGVHDGSLHKGAWFLVCSGALVNERTVVVAAHCVTDLGKVTMIKTADLKVILGKFYRDDDRDEKTTQSLRISAIILHPNYDPILLDADIAILKLLDKARISTRVQPICLAASRDLSTSFQESHITVAGWNVLADVRSPGFKNDTLRSGVVSVVDSLLCEEQHEDHGIPVSVTDNMFCASQDPTAPSDICTAETGGIAAVSFPGRASPEPRWHLMGLVSWSYDKTCSHRLSTAFTKVLPFKDWIERNMK</sequence>
<reference key="1">
    <citation type="submission" date="2004-11" db="EMBL/GenBank/DDBJ databases">
        <authorList>
            <consortium name="The German cDNA consortium"/>
        </authorList>
    </citation>
    <scope>NUCLEOTIDE SEQUENCE [LARGE SCALE MRNA]</scope>
    <source>
        <tissue>Heart</tissue>
    </source>
</reference>
<comment type="function">
    <text evidence="1">May play a role in regeneration of skeletal muscle.</text>
</comment>
<comment type="subcellular location">
    <subcellularLocation>
        <location evidence="7">Secreted</location>
    </subcellularLocation>
</comment>
<comment type="similarity">
    <text evidence="5">Belongs to the peptidase S1 family.</text>
</comment>
<comment type="caution">
    <text evidence="7">Although related to peptidase S1 family, lacks the conserved active Ser residue in position 665 which is replaced by a Thr, suggesting that it has no protease activity.</text>
</comment>
<dbReference type="EMBL" id="CR857928">
    <property type="protein sequence ID" value="CAH90176.1"/>
    <property type="molecule type" value="mRNA"/>
</dbReference>
<dbReference type="RefSeq" id="NP_001125060.1">
    <property type="nucleotide sequence ID" value="NM_001131588.1"/>
</dbReference>
<dbReference type="SMR" id="Q5RDI1"/>
<dbReference type="FunCoup" id="Q5RDI1">
    <property type="interactions" value="39"/>
</dbReference>
<dbReference type="STRING" id="9601.ENSPPYP00000003852"/>
<dbReference type="MEROPS" id="S01.998"/>
<dbReference type="GlyCosmos" id="Q5RDI1">
    <property type="glycosylation" value="2 sites, No reported glycans"/>
</dbReference>
<dbReference type="GeneID" id="100171941"/>
<dbReference type="KEGG" id="pon:100171941"/>
<dbReference type="CTD" id="25891"/>
<dbReference type="eggNOG" id="KOG3627">
    <property type="taxonomic scope" value="Eukaryota"/>
</dbReference>
<dbReference type="InParanoid" id="Q5RDI1"/>
<dbReference type="OrthoDB" id="6147874at2759"/>
<dbReference type="Proteomes" id="UP000001595">
    <property type="component" value="Unplaced"/>
</dbReference>
<dbReference type="GO" id="GO:0005576">
    <property type="term" value="C:extracellular region"/>
    <property type="evidence" value="ECO:0007669"/>
    <property type="project" value="UniProtKB-SubCell"/>
</dbReference>
<dbReference type="GO" id="GO:0005509">
    <property type="term" value="F:calcium ion binding"/>
    <property type="evidence" value="ECO:0007669"/>
    <property type="project" value="InterPro"/>
</dbReference>
<dbReference type="CDD" id="cd00033">
    <property type="entry name" value="CCP"/>
    <property type="match status" value="2"/>
</dbReference>
<dbReference type="CDD" id="cd00041">
    <property type="entry name" value="CUB"/>
    <property type="match status" value="1"/>
</dbReference>
<dbReference type="CDD" id="cd00054">
    <property type="entry name" value="EGF_CA"/>
    <property type="match status" value="1"/>
</dbReference>
<dbReference type="CDD" id="cd00190">
    <property type="entry name" value="Tryp_SPc"/>
    <property type="match status" value="1"/>
</dbReference>
<dbReference type="FunFam" id="2.10.70.10:FF:000029">
    <property type="entry name" value="Inactive serine protease PAMR1 isoform X1"/>
    <property type="match status" value="1"/>
</dbReference>
<dbReference type="FunFam" id="2.10.25.10:FF:000970">
    <property type="entry name" value="Peptidase domain-containing-associated with muscle regeneration 1"/>
    <property type="match status" value="1"/>
</dbReference>
<dbReference type="FunFam" id="2.60.120.290:FF:000005">
    <property type="entry name" value="Procollagen C-endopeptidase enhancer 1"/>
    <property type="match status" value="1"/>
</dbReference>
<dbReference type="FunFam" id="2.40.10.10:FF:000068">
    <property type="entry name" value="transmembrane protease serine 2"/>
    <property type="match status" value="1"/>
</dbReference>
<dbReference type="Gene3D" id="2.10.70.10">
    <property type="entry name" value="Complement Module, domain 1"/>
    <property type="match status" value="2"/>
</dbReference>
<dbReference type="Gene3D" id="2.10.25.10">
    <property type="entry name" value="Laminin"/>
    <property type="match status" value="1"/>
</dbReference>
<dbReference type="Gene3D" id="2.60.120.290">
    <property type="entry name" value="Spermadhesin, CUB domain"/>
    <property type="match status" value="1"/>
</dbReference>
<dbReference type="Gene3D" id="2.40.10.10">
    <property type="entry name" value="Trypsin-like serine proteases"/>
    <property type="match status" value="1"/>
</dbReference>
<dbReference type="InterPro" id="IPR000859">
    <property type="entry name" value="CUB_dom"/>
</dbReference>
<dbReference type="InterPro" id="IPR001881">
    <property type="entry name" value="EGF-like_Ca-bd_dom"/>
</dbReference>
<dbReference type="InterPro" id="IPR000742">
    <property type="entry name" value="EGF-like_dom"/>
</dbReference>
<dbReference type="InterPro" id="IPR009003">
    <property type="entry name" value="Peptidase_S1_PA"/>
</dbReference>
<dbReference type="InterPro" id="IPR043504">
    <property type="entry name" value="Peptidase_S1_PA_chymotrypsin"/>
</dbReference>
<dbReference type="InterPro" id="IPR001314">
    <property type="entry name" value="Peptidase_S1A"/>
</dbReference>
<dbReference type="InterPro" id="IPR051659">
    <property type="entry name" value="Serine_Protease_S1-Domain"/>
</dbReference>
<dbReference type="InterPro" id="IPR035914">
    <property type="entry name" value="Sperma_CUB_dom_sf"/>
</dbReference>
<dbReference type="InterPro" id="IPR035976">
    <property type="entry name" value="Sushi/SCR/CCP_sf"/>
</dbReference>
<dbReference type="InterPro" id="IPR000436">
    <property type="entry name" value="Sushi_SCR_CCP_dom"/>
</dbReference>
<dbReference type="InterPro" id="IPR001254">
    <property type="entry name" value="Trypsin_dom"/>
</dbReference>
<dbReference type="PANTHER" id="PTHR24254:SF9">
    <property type="entry name" value="INACTIVE SERINE PROTEASE PAMR1"/>
    <property type="match status" value="1"/>
</dbReference>
<dbReference type="PANTHER" id="PTHR24254">
    <property type="entry name" value="PROTHROMBIN"/>
    <property type="match status" value="1"/>
</dbReference>
<dbReference type="Pfam" id="PF00431">
    <property type="entry name" value="CUB"/>
    <property type="match status" value="1"/>
</dbReference>
<dbReference type="Pfam" id="PF00008">
    <property type="entry name" value="EGF"/>
    <property type="match status" value="1"/>
</dbReference>
<dbReference type="Pfam" id="PF00084">
    <property type="entry name" value="Sushi"/>
    <property type="match status" value="2"/>
</dbReference>
<dbReference type="Pfam" id="PF00089">
    <property type="entry name" value="Trypsin"/>
    <property type="match status" value="1"/>
</dbReference>
<dbReference type="PRINTS" id="PR00722">
    <property type="entry name" value="CHYMOTRYPSIN"/>
</dbReference>
<dbReference type="SMART" id="SM00032">
    <property type="entry name" value="CCP"/>
    <property type="match status" value="2"/>
</dbReference>
<dbReference type="SMART" id="SM00042">
    <property type="entry name" value="CUB"/>
    <property type="match status" value="1"/>
</dbReference>
<dbReference type="SMART" id="SM00181">
    <property type="entry name" value="EGF"/>
    <property type="match status" value="2"/>
</dbReference>
<dbReference type="SMART" id="SM00179">
    <property type="entry name" value="EGF_CA"/>
    <property type="match status" value="1"/>
</dbReference>
<dbReference type="SMART" id="SM00020">
    <property type="entry name" value="Tryp_SPc"/>
    <property type="match status" value="1"/>
</dbReference>
<dbReference type="SUPFAM" id="SSF57535">
    <property type="entry name" value="Complement control module/SCR domain"/>
    <property type="match status" value="1"/>
</dbReference>
<dbReference type="SUPFAM" id="SSF57196">
    <property type="entry name" value="EGF/Laminin"/>
    <property type="match status" value="1"/>
</dbReference>
<dbReference type="SUPFAM" id="SSF49854">
    <property type="entry name" value="Spermadhesin, CUB domain"/>
    <property type="match status" value="1"/>
</dbReference>
<dbReference type="SUPFAM" id="SSF50494">
    <property type="entry name" value="Trypsin-like serine proteases"/>
    <property type="match status" value="1"/>
</dbReference>
<dbReference type="PROSITE" id="PS01180">
    <property type="entry name" value="CUB"/>
    <property type="match status" value="1"/>
</dbReference>
<dbReference type="PROSITE" id="PS00022">
    <property type="entry name" value="EGF_1"/>
    <property type="match status" value="1"/>
</dbReference>
<dbReference type="PROSITE" id="PS01186">
    <property type="entry name" value="EGF_2"/>
    <property type="match status" value="1"/>
</dbReference>
<dbReference type="PROSITE" id="PS50026">
    <property type="entry name" value="EGF_3"/>
    <property type="match status" value="1"/>
</dbReference>
<dbReference type="PROSITE" id="PS50923">
    <property type="entry name" value="SUSHI"/>
    <property type="match status" value="2"/>
</dbReference>
<dbReference type="PROSITE" id="PS50240">
    <property type="entry name" value="TRYPSIN_DOM"/>
    <property type="match status" value="1"/>
</dbReference>
<organism>
    <name type="scientific">Pongo abelii</name>
    <name type="common">Sumatran orangutan</name>
    <name type="synonym">Pongo pygmaeus abelii</name>
    <dbReference type="NCBI Taxonomy" id="9601"/>
    <lineage>
        <taxon>Eukaryota</taxon>
        <taxon>Metazoa</taxon>
        <taxon>Chordata</taxon>
        <taxon>Craniata</taxon>
        <taxon>Vertebrata</taxon>
        <taxon>Euteleostomi</taxon>
        <taxon>Mammalia</taxon>
        <taxon>Eutheria</taxon>
        <taxon>Euarchontoglires</taxon>
        <taxon>Primates</taxon>
        <taxon>Haplorrhini</taxon>
        <taxon>Catarrhini</taxon>
        <taxon>Hominidae</taxon>
        <taxon>Pongo</taxon>
    </lineage>
</organism>
<proteinExistence type="evidence at transcript level"/>
<evidence type="ECO:0000250" key="1"/>
<evidence type="ECO:0000255" key="2"/>
<evidence type="ECO:0000255" key="3">
    <source>
        <dbReference type="PROSITE-ProRule" id="PRU00059"/>
    </source>
</evidence>
<evidence type="ECO:0000255" key="4">
    <source>
        <dbReference type="PROSITE-ProRule" id="PRU00076"/>
    </source>
</evidence>
<evidence type="ECO:0000255" key="5">
    <source>
        <dbReference type="PROSITE-ProRule" id="PRU00274"/>
    </source>
</evidence>
<evidence type="ECO:0000255" key="6">
    <source>
        <dbReference type="PROSITE-ProRule" id="PRU00302"/>
    </source>
</evidence>
<evidence type="ECO:0000305" key="7"/>
<name>PAMR1_PONAB</name>
<keyword id="KW-1015">Disulfide bond</keyword>
<keyword id="KW-0245">EGF-like domain</keyword>
<keyword id="KW-0325">Glycoprotein</keyword>
<keyword id="KW-1185">Reference proteome</keyword>
<keyword id="KW-0677">Repeat</keyword>
<keyword id="KW-0964">Secreted</keyword>
<keyword id="KW-0721">Serine protease homolog</keyword>
<keyword id="KW-0732">Signal</keyword>
<keyword id="KW-0768">Sushi</keyword>
<gene>
    <name type="primary">PAMR1</name>
    <name type="synonym">RAMP</name>
</gene>
<protein>
    <recommendedName>
        <fullName>Inactive serine protease PAMR1</fullName>
    </recommendedName>
    <alternativeName>
        <fullName>Peptidase domain-containing protein associated with muscle regeneration 1</fullName>
    </alternativeName>
    <alternativeName>
        <fullName>Regeneration-associated muscle protease homolog</fullName>
    </alternativeName>
</protein>
<accession>Q5RDI1</accession>